<reference key="1">
    <citation type="journal article" date="2003" name="Nucleic Acids Res.">
        <title>What's in the genome of a filamentous fungus? Analysis of the Neurospora genome sequence.</title>
        <authorList>
            <person name="Mannhaupt G."/>
            <person name="Montrone C."/>
            <person name="Haase D."/>
            <person name="Mewes H.-W."/>
            <person name="Aign V."/>
            <person name="Hoheisel J.D."/>
            <person name="Fartmann B."/>
            <person name="Nyakatura G."/>
            <person name="Kempken F."/>
            <person name="Maier J."/>
            <person name="Schulte U."/>
        </authorList>
    </citation>
    <scope>NUCLEOTIDE SEQUENCE [LARGE SCALE GENOMIC DNA]</scope>
    <source>
        <strain>ATCC 24698 / 74-OR23-1A / CBS 708.71 / DSM 1257 / FGSC 987</strain>
    </source>
</reference>
<reference key="2">
    <citation type="journal article" date="2003" name="Nature">
        <title>The genome sequence of the filamentous fungus Neurospora crassa.</title>
        <authorList>
            <person name="Galagan J.E."/>
            <person name="Calvo S.E."/>
            <person name="Borkovich K.A."/>
            <person name="Selker E.U."/>
            <person name="Read N.D."/>
            <person name="Jaffe D.B."/>
            <person name="FitzHugh W."/>
            <person name="Ma L.-J."/>
            <person name="Smirnov S."/>
            <person name="Purcell S."/>
            <person name="Rehman B."/>
            <person name="Elkins T."/>
            <person name="Engels R."/>
            <person name="Wang S."/>
            <person name="Nielsen C.B."/>
            <person name="Butler J."/>
            <person name="Endrizzi M."/>
            <person name="Qui D."/>
            <person name="Ianakiev P."/>
            <person name="Bell-Pedersen D."/>
            <person name="Nelson M.A."/>
            <person name="Werner-Washburne M."/>
            <person name="Selitrennikoff C.P."/>
            <person name="Kinsey J.A."/>
            <person name="Braun E.L."/>
            <person name="Zelter A."/>
            <person name="Schulte U."/>
            <person name="Kothe G.O."/>
            <person name="Jedd G."/>
            <person name="Mewes H.-W."/>
            <person name="Staben C."/>
            <person name="Marcotte E."/>
            <person name="Greenberg D."/>
            <person name="Roy A."/>
            <person name="Foley K."/>
            <person name="Naylor J."/>
            <person name="Stange-Thomann N."/>
            <person name="Barrett R."/>
            <person name="Gnerre S."/>
            <person name="Kamal M."/>
            <person name="Kamvysselis M."/>
            <person name="Mauceli E.W."/>
            <person name="Bielke C."/>
            <person name="Rudd S."/>
            <person name="Frishman D."/>
            <person name="Krystofova S."/>
            <person name="Rasmussen C."/>
            <person name="Metzenberg R.L."/>
            <person name="Perkins D.D."/>
            <person name="Kroken S."/>
            <person name="Cogoni C."/>
            <person name="Macino G."/>
            <person name="Catcheside D.E.A."/>
            <person name="Li W."/>
            <person name="Pratt R.J."/>
            <person name="Osmani S.A."/>
            <person name="DeSouza C.P.C."/>
            <person name="Glass N.L."/>
            <person name="Orbach M.J."/>
            <person name="Berglund J.A."/>
            <person name="Voelker R."/>
            <person name="Yarden O."/>
            <person name="Plamann M."/>
            <person name="Seiler S."/>
            <person name="Dunlap J.C."/>
            <person name="Radford A."/>
            <person name="Aramayo R."/>
            <person name="Natvig D.O."/>
            <person name="Alex L.A."/>
            <person name="Mannhaupt G."/>
            <person name="Ebbole D.J."/>
            <person name="Freitag M."/>
            <person name="Paulsen I."/>
            <person name="Sachs M.S."/>
            <person name="Lander E.S."/>
            <person name="Nusbaum C."/>
            <person name="Birren B.W."/>
        </authorList>
    </citation>
    <scope>NUCLEOTIDE SEQUENCE [LARGE SCALE GENOMIC DNA]</scope>
    <source>
        <strain>ATCC 24698 / 74-OR23-1A / CBS 708.71 / DSM 1257 / FGSC 987</strain>
    </source>
</reference>
<dbReference type="EC" id="4.2.1.19"/>
<dbReference type="EMBL" id="AL451021">
    <property type="protein sequence ID" value="CAC18287.1"/>
    <property type="molecule type" value="Genomic_DNA"/>
</dbReference>
<dbReference type="EMBL" id="CM002240">
    <property type="protein sequence ID" value="EAA32150.1"/>
    <property type="molecule type" value="Genomic_DNA"/>
</dbReference>
<dbReference type="RefSeq" id="XP_961386.1">
    <property type="nucleotide sequence ID" value="XM_956293.2"/>
</dbReference>
<dbReference type="SMR" id="Q9HEG3"/>
<dbReference type="FunCoup" id="Q9HEG3">
    <property type="interactions" value="210"/>
</dbReference>
<dbReference type="STRING" id="367110.Q9HEG3"/>
<dbReference type="PaxDb" id="5141-EFNCRP00000004054"/>
<dbReference type="EnsemblFungi" id="EAA32150">
    <property type="protein sequence ID" value="EAA32150"/>
    <property type="gene ID" value="NCU01300"/>
</dbReference>
<dbReference type="GeneID" id="3877587"/>
<dbReference type="KEGG" id="ncr:NCU01300"/>
<dbReference type="VEuPathDB" id="FungiDB:NCU01300"/>
<dbReference type="HOGENOM" id="CLU_044308_3_0_1"/>
<dbReference type="InParanoid" id="Q9HEG3"/>
<dbReference type="OMA" id="GIPFFDH"/>
<dbReference type="OrthoDB" id="447729at2759"/>
<dbReference type="UniPathway" id="UPA00031">
    <property type="reaction ID" value="UER00011"/>
</dbReference>
<dbReference type="Proteomes" id="UP000001805">
    <property type="component" value="Chromosome 2, Linkage Group V"/>
</dbReference>
<dbReference type="GO" id="GO:0004424">
    <property type="term" value="F:imidazoleglycerol-phosphate dehydratase activity"/>
    <property type="evidence" value="ECO:0000318"/>
    <property type="project" value="GO_Central"/>
</dbReference>
<dbReference type="GO" id="GO:0000105">
    <property type="term" value="P:L-histidine biosynthetic process"/>
    <property type="evidence" value="ECO:0000318"/>
    <property type="project" value="GO_Central"/>
</dbReference>
<dbReference type="CDD" id="cd07914">
    <property type="entry name" value="IGPD"/>
    <property type="match status" value="1"/>
</dbReference>
<dbReference type="FunFam" id="3.30.230.40:FF:000005">
    <property type="entry name" value="Imidazoleglycerol-phosphate dehydratase"/>
    <property type="match status" value="1"/>
</dbReference>
<dbReference type="FunFam" id="3.30.230.40:FF:000001">
    <property type="entry name" value="Imidazoleglycerol-phosphate dehydratase HisB"/>
    <property type="match status" value="1"/>
</dbReference>
<dbReference type="Gene3D" id="3.30.230.40">
    <property type="entry name" value="Imidazole glycerol phosphate dehydratase, domain 1"/>
    <property type="match status" value="2"/>
</dbReference>
<dbReference type="HAMAP" id="MF_00076">
    <property type="entry name" value="HisB"/>
    <property type="match status" value="1"/>
</dbReference>
<dbReference type="InterPro" id="IPR038494">
    <property type="entry name" value="IGPD_sf"/>
</dbReference>
<dbReference type="InterPro" id="IPR000807">
    <property type="entry name" value="ImidazoleglycerolP_deHydtase"/>
</dbReference>
<dbReference type="InterPro" id="IPR020565">
    <property type="entry name" value="ImidazoleglycerP_deHydtase_CS"/>
</dbReference>
<dbReference type="InterPro" id="IPR020568">
    <property type="entry name" value="Ribosomal_Su5_D2-typ_SF"/>
</dbReference>
<dbReference type="PANTHER" id="PTHR23133:SF2">
    <property type="entry name" value="IMIDAZOLEGLYCEROL-PHOSPHATE DEHYDRATASE"/>
    <property type="match status" value="1"/>
</dbReference>
<dbReference type="PANTHER" id="PTHR23133">
    <property type="entry name" value="IMIDAZOLEGLYCEROL-PHOSPHATE DEHYDRATASE HIS7"/>
    <property type="match status" value="1"/>
</dbReference>
<dbReference type="Pfam" id="PF00475">
    <property type="entry name" value="IGPD"/>
    <property type="match status" value="1"/>
</dbReference>
<dbReference type="SUPFAM" id="SSF54211">
    <property type="entry name" value="Ribosomal protein S5 domain 2-like"/>
    <property type="match status" value="2"/>
</dbReference>
<dbReference type="PROSITE" id="PS00954">
    <property type="entry name" value="IGP_DEHYDRATASE_1"/>
    <property type="match status" value="1"/>
</dbReference>
<dbReference type="PROSITE" id="PS00955">
    <property type="entry name" value="IGP_DEHYDRATASE_2"/>
    <property type="match status" value="1"/>
</dbReference>
<accession>Q9HEG3</accession>
<accession>Q1K7W5</accession>
<protein>
    <recommendedName>
        <fullName>Imidazoleglycerol-phosphate dehydratase</fullName>
        <shortName>IGPD</shortName>
        <ecNumber>4.2.1.19</ecNumber>
    </recommendedName>
</protein>
<comment type="catalytic activity">
    <reaction>
        <text>D-erythro-1-(imidazol-4-yl)glycerol 3-phosphate = 3-(imidazol-4-yl)-2-oxopropyl phosphate + H2O</text>
        <dbReference type="Rhea" id="RHEA:11040"/>
        <dbReference type="ChEBI" id="CHEBI:15377"/>
        <dbReference type="ChEBI" id="CHEBI:57766"/>
        <dbReference type="ChEBI" id="CHEBI:58278"/>
        <dbReference type="EC" id="4.2.1.19"/>
    </reaction>
</comment>
<comment type="pathway">
    <text>Amino-acid biosynthesis; L-histidine biosynthesis; L-histidine from 5-phospho-alpha-D-ribose 1-diphosphate: step 6/9.</text>
</comment>
<comment type="similarity">
    <text evidence="1">Belongs to the imidazoleglycerol-phosphate dehydratase family.</text>
</comment>
<keyword id="KW-0028">Amino-acid biosynthesis</keyword>
<keyword id="KW-0368">Histidine biosynthesis</keyword>
<keyword id="KW-0456">Lyase</keyword>
<keyword id="KW-1185">Reference proteome</keyword>
<evidence type="ECO:0000305" key="1"/>
<feature type="chain" id="PRO_0000158240" description="Imidazoleglycerol-phosphate dehydratase">
    <location>
        <begin position="1"/>
        <end position="229"/>
    </location>
</feature>
<organism>
    <name type="scientific">Neurospora crassa (strain ATCC 24698 / 74-OR23-1A / CBS 708.71 / DSM 1257 / FGSC 987)</name>
    <dbReference type="NCBI Taxonomy" id="367110"/>
    <lineage>
        <taxon>Eukaryota</taxon>
        <taxon>Fungi</taxon>
        <taxon>Dikarya</taxon>
        <taxon>Ascomycota</taxon>
        <taxon>Pezizomycotina</taxon>
        <taxon>Sordariomycetes</taxon>
        <taxon>Sordariomycetidae</taxon>
        <taxon>Sordariales</taxon>
        <taxon>Sordariaceae</taxon>
        <taxon>Neurospora</taxon>
    </lineage>
</organism>
<name>HIS7_NEUCR</name>
<sequence>MSTEQPAPRWAAFARDTNETKIQIALNLDGGAFPPETDARLNVSIADGHATQASKSQTISVNTGIGFLDHMLHALAKHAGWSLALACKGDLHIDDHHTAEDVCIALGYAFAKALGTPTGLARFGSAYCPLDEALSRAVVDLSNRPFAVVDLGLKREKIGDLSTEMIPHCIHSFAGAARITVHVDCLRGDNDHHRAESAFKALAVATRQATSRVAGREGEVPSTKGTLSV</sequence>
<proteinExistence type="inferred from homology"/>
<gene>
    <name type="ORF">65E11.030</name>
    <name type="ORF">NCU01300</name>
</gene>